<proteinExistence type="inferred from homology"/>
<organism>
    <name type="scientific">Clostridium kluyveri (strain NBRC 12016)</name>
    <dbReference type="NCBI Taxonomy" id="583346"/>
    <lineage>
        <taxon>Bacteria</taxon>
        <taxon>Bacillati</taxon>
        <taxon>Bacillota</taxon>
        <taxon>Clostridia</taxon>
        <taxon>Eubacteriales</taxon>
        <taxon>Clostridiaceae</taxon>
        <taxon>Clostridium</taxon>
    </lineage>
</organism>
<name>MRAY_CLOK1</name>
<reference key="1">
    <citation type="submission" date="2005-09" db="EMBL/GenBank/DDBJ databases">
        <title>Complete genome sequence of Clostridium kluyveri and comparative genomics of Clostridia species.</title>
        <authorList>
            <person name="Inui M."/>
            <person name="Nonaka H."/>
            <person name="Shinoda Y."/>
            <person name="Ikenaga Y."/>
            <person name="Abe M."/>
            <person name="Naito K."/>
            <person name="Vertes A.A."/>
            <person name="Yukawa H."/>
        </authorList>
    </citation>
    <scope>NUCLEOTIDE SEQUENCE [LARGE SCALE GENOMIC DNA]</scope>
    <source>
        <strain>NBRC 12016</strain>
    </source>
</reference>
<sequence length="317" mass="34553">MYKLIYSVLIAFFIAMLEGPILIPLLHKFKFGQSIREDGPKTHLKKAGTPTMGGIIFILATFITMAVIVKKPSDEAMIALYAFIGFGIIGAIDDTLKIVRRKNLGLRAYQKMILLLAISGIFAYYSANNPYIGTSIIIPFKRDTWDLGVFYIPFIIVYFAATTNAVNLTDGLDGLATSVTLLVMTFLALVSFAMGHITLAVFCAILAGALLGFLKYNAFPAQIFMGDTGSLALGGAIGAVAMILKLPLLVIIIGGIYVLEALSVIFQVLSFKLTGKRIFKMAPIHHHFELSGWHETRVVSVFCIVTVILCLVGFLSL</sequence>
<keyword id="KW-0131">Cell cycle</keyword>
<keyword id="KW-0132">Cell division</keyword>
<keyword id="KW-1003">Cell membrane</keyword>
<keyword id="KW-0133">Cell shape</keyword>
<keyword id="KW-0961">Cell wall biogenesis/degradation</keyword>
<keyword id="KW-0460">Magnesium</keyword>
<keyword id="KW-0472">Membrane</keyword>
<keyword id="KW-0479">Metal-binding</keyword>
<keyword id="KW-0573">Peptidoglycan synthesis</keyword>
<keyword id="KW-0808">Transferase</keyword>
<keyword id="KW-0812">Transmembrane</keyword>
<keyword id="KW-1133">Transmembrane helix</keyword>
<protein>
    <recommendedName>
        <fullName evidence="1">Phospho-N-acetylmuramoyl-pentapeptide-transferase</fullName>
        <ecNumber evidence="1">2.7.8.13</ecNumber>
    </recommendedName>
    <alternativeName>
        <fullName evidence="1">UDP-MurNAc-pentapeptide phosphotransferase</fullName>
    </alternativeName>
</protein>
<gene>
    <name evidence="1" type="primary">mraY</name>
    <name type="ordered locus">CKR_1084</name>
</gene>
<dbReference type="EC" id="2.7.8.13" evidence="1"/>
<dbReference type="EMBL" id="AP009049">
    <property type="protein sequence ID" value="BAH06135.1"/>
    <property type="molecule type" value="Genomic_DNA"/>
</dbReference>
<dbReference type="RefSeq" id="WP_012101567.1">
    <property type="nucleotide sequence ID" value="NC_011837.1"/>
</dbReference>
<dbReference type="SMR" id="B9E0W0"/>
<dbReference type="KEGG" id="ckr:CKR_1084"/>
<dbReference type="HOGENOM" id="CLU_023982_0_1_9"/>
<dbReference type="UniPathway" id="UPA00219"/>
<dbReference type="Proteomes" id="UP000007969">
    <property type="component" value="Chromosome"/>
</dbReference>
<dbReference type="GO" id="GO:0005886">
    <property type="term" value="C:plasma membrane"/>
    <property type="evidence" value="ECO:0007669"/>
    <property type="project" value="UniProtKB-SubCell"/>
</dbReference>
<dbReference type="GO" id="GO:0046872">
    <property type="term" value="F:metal ion binding"/>
    <property type="evidence" value="ECO:0007669"/>
    <property type="project" value="UniProtKB-KW"/>
</dbReference>
<dbReference type="GO" id="GO:0008963">
    <property type="term" value="F:phospho-N-acetylmuramoyl-pentapeptide-transferase activity"/>
    <property type="evidence" value="ECO:0007669"/>
    <property type="project" value="UniProtKB-UniRule"/>
</dbReference>
<dbReference type="GO" id="GO:0051992">
    <property type="term" value="F:UDP-N-acetylmuramoyl-L-alanyl-D-glutamyl-meso-2,6-diaminopimelyl-D-alanyl-D-alanine:undecaprenyl-phosphate transferase activity"/>
    <property type="evidence" value="ECO:0007669"/>
    <property type="project" value="RHEA"/>
</dbReference>
<dbReference type="GO" id="GO:0051301">
    <property type="term" value="P:cell division"/>
    <property type="evidence" value="ECO:0007669"/>
    <property type="project" value="UniProtKB-KW"/>
</dbReference>
<dbReference type="GO" id="GO:0071555">
    <property type="term" value="P:cell wall organization"/>
    <property type="evidence" value="ECO:0007669"/>
    <property type="project" value="UniProtKB-KW"/>
</dbReference>
<dbReference type="GO" id="GO:0009252">
    <property type="term" value="P:peptidoglycan biosynthetic process"/>
    <property type="evidence" value="ECO:0007669"/>
    <property type="project" value="UniProtKB-UniRule"/>
</dbReference>
<dbReference type="GO" id="GO:0008360">
    <property type="term" value="P:regulation of cell shape"/>
    <property type="evidence" value="ECO:0007669"/>
    <property type="project" value="UniProtKB-KW"/>
</dbReference>
<dbReference type="CDD" id="cd06852">
    <property type="entry name" value="GT_MraY"/>
    <property type="match status" value="1"/>
</dbReference>
<dbReference type="HAMAP" id="MF_00038">
    <property type="entry name" value="MraY"/>
    <property type="match status" value="1"/>
</dbReference>
<dbReference type="InterPro" id="IPR000715">
    <property type="entry name" value="Glycosyl_transferase_4"/>
</dbReference>
<dbReference type="InterPro" id="IPR003524">
    <property type="entry name" value="PNAcMuramoyl-5peptid_Trfase"/>
</dbReference>
<dbReference type="InterPro" id="IPR018480">
    <property type="entry name" value="PNAcMuramoyl-5peptid_Trfase_CS"/>
</dbReference>
<dbReference type="NCBIfam" id="TIGR00445">
    <property type="entry name" value="mraY"/>
    <property type="match status" value="1"/>
</dbReference>
<dbReference type="PANTHER" id="PTHR22926">
    <property type="entry name" value="PHOSPHO-N-ACETYLMURAMOYL-PENTAPEPTIDE-TRANSFERASE"/>
    <property type="match status" value="1"/>
</dbReference>
<dbReference type="PANTHER" id="PTHR22926:SF5">
    <property type="entry name" value="PHOSPHO-N-ACETYLMURAMOYL-PENTAPEPTIDE-TRANSFERASE HOMOLOG"/>
    <property type="match status" value="1"/>
</dbReference>
<dbReference type="Pfam" id="PF00953">
    <property type="entry name" value="Glycos_transf_4"/>
    <property type="match status" value="1"/>
</dbReference>
<dbReference type="Pfam" id="PF10555">
    <property type="entry name" value="MraY_sig1"/>
    <property type="match status" value="1"/>
</dbReference>
<dbReference type="PROSITE" id="PS01347">
    <property type="entry name" value="MRAY_1"/>
    <property type="match status" value="1"/>
</dbReference>
<dbReference type="PROSITE" id="PS01348">
    <property type="entry name" value="MRAY_2"/>
    <property type="match status" value="1"/>
</dbReference>
<evidence type="ECO:0000255" key="1">
    <source>
        <dbReference type="HAMAP-Rule" id="MF_00038"/>
    </source>
</evidence>
<comment type="function">
    <text evidence="1">Catalyzes the initial step of the lipid cycle reactions in the biosynthesis of the cell wall peptidoglycan: transfers peptidoglycan precursor phospho-MurNAc-pentapeptide from UDP-MurNAc-pentapeptide onto the lipid carrier undecaprenyl phosphate, yielding undecaprenyl-pyrophosphoryl-MurNAc-pentapeptide, known as lipid I.</text>
</comment>
<comment type="catalytic activity">
    <reaction evidence="1">
        <text>UDP-N-acetyl-alpha-D-muramoyl-L-alanyl-gamma-D-glutamyl-meso-2,6-diaminopimeloyl-D-alanyl-D-alanine + di-trans,octa-cis-undecaprenyl phosphate = di-trans,octa-cis-undecaprenyl diphospho-N-acetyl-alpha-D-muramoyl-L-alanyl-D-glutamyl-meso-2,6-diaminopimeloyl-D-alanyl-D-alanine + UMP</text>
        <dbReference type="Rhea" id="RHEA:28386"/>
        <dbReference type="ChEBI" id="CHEBI:57865"/>
        <dbReference type="ChEBI" id="CHEBI:60392"/>
        <dbReference type="ChEBI" id="CHEBI:61386"/>
        <dbReference type="ChEBI" id="CHEBI:61387"/>
        <dbReference type="EC" id="2.7.8.13"/>
    </reaction>
</comment>
<comment type="cofactor">
    <cofactor evidence="1">
        <name>Mg(2+)</name>
        <dbReference type="ChEBI" id="CHEBI:18420"/>
    </cofactor>
</comment>
<comment type="pathway">
    <text evidence="1">Cell wall biogenesis; peptidoglycan biosynthesis.</text>
</comment>
<comment type="subcellular location">
    <subcellularLocation>
        <location evidence="1">Cell membrane</location>
        <topology evidence="1">Multi-pass membrane protein</topology>
    </subcellularLocation>
</comment>
<comment type="similarity">
    <text evidence="1">Belongs to the glycosyltransferase 4 family. MraY subfamily.</text>
</comment>
<feature type="chain" id="PRO_1000117174" description="Phospho-N-acetylmuramoyl-pentapeptide-transferase">
    <location>
        <begin position="1"/>
        <end position="317"/>
    </location>
</feature>
<feature type="transmembrane region" description="Helical" evidence="1">
    <location>
        <begin position="4"/>
        <end position="24"/>
    </location>
</feature>
<feature type="transmembrane region" description="Helical" evidence="1">
    <location>
        <begin position="49"/>
        <end position="69"/>
    </location>
</feature>
<feature type="transmembrane region" description="Helical" evidence="1">
    <location>
        <begin position="76"/>
        <end position="96"/>
    </location>
</feature>
<feature type="transmembrane region" description="Helical" evidence="1">
    <location>
        <begin position="112"/>
        <end position="132"/>
    </location>
</feature>
<feature type="transmembrane region" description="Helical" evidence="1">
    <location>
        <begin position="147"/>
        <end position="167"/>
    </location>
</feature>
<feature type="transmembrane region" description="Helical" evidence="1">
    <location>
        <begin position="186"/>
        <end position="206"/>
    </location>
</feature>
<feature type="transmembrane region" description="Helical" evidence="1">
    <location>
        <begin position="223"/>
        <end position="243"/>
    </location>
</feature>
<feature type="transmembrane region" description="Helical" evidence="1">
    <location>
        <begin position="246"/>
        <end position="266"/>
    </location>
</feature>
<feature type="transmembrane region" description="Helical" evidence="1">
    <location>
        <begin position="297"/>
        <end position="317"/>
    </location>
</feature>
<accession>B9E0W0</accession>